<keyword id="KW-1185">Reference proteome</keyword>
<gene>
    <name type="ordered locus">BC_1197</name>
</gene>
<name>Y1197_BACCR</name>
<proteinExistence type="inferred from homology"/>
<organism>
    <name type="scientific">Bacillus cereus (strain ATCC 14579 / DSM 31 / CCUG 7414 / JCM 2152 / NBRC 15305 / NCIMB 9373 / NCTC 2599 / NRRL B-3711)</name>
    <dbReference type="NCBI Taxonomy" id="226900"/>
    <lineage>
        <taxon>Bacteria</taxon>
        <taxon>Bacillati</taxon>
        <taxon>Bacillota</taxon>
        <taxon>Bacilli</taxon>
        <taxon>Bacillales</taxon>
        <taxon>Bacillaceae</taxon>
        <taxon>Bacillus</taxon>
        <taxon>Bacillus cereus group</taxon>
    </lineage>
</organism>
<comment type="similarity">
    <text evidence="1">Belongs to the UPF0738 family.</text>
</comment>
<reference key="1">
    <citation type="journal article" date="2003" name="Nature">
        <title>Genome sequence of Bacillus cereus and comparative analysis with Bacillus anthracis.</title>
        <authorList>
            <person name="Ivanova N."/>
            <person name="Sorokin A."/>
            <person name="Anderson I."/>
            <person name="Galleron N."/>
            <person name="Candelon B."/>
            <person name="Kapatral V."/>
            <person name="Bhattacharyya A."/>
            <person name="Reznik G."/>
            <person name="Mikhailova N."/>
            <person name="Lapidus A."/>
            <person name="Chu L."/>
            <person name="Mazur M."/>
            <person name="Goltsman E."/>
            <person name="Larsen N."/>
            <person name="D'Souza M."/>
            <person name="Walunas T."/>
            <person name="Grechkin Y."/>
            <person name="Pusch G."/>
            <person name="Haselkorn R."/>
            <person name="Fonstein M."/>
            <person name="Ehrlich S.D."/>
            <person name="Overbeek R."/>
            <person name="Kyrpides N.C."/>
        </authorList>
    </citation>
    <scope>NUCLEOTIDE SEQUENCE [LARGE SCALE GENOMIC DNA]</scope>
    <source>
        <strain>ATCC 14579 / DSM 31 / CCUG 7414 / JCM 2152 / NBRC 15305 / NCIMB 9373 / NCTC 2599 / NRRL B-3711</strain>
    </source>
</reference>
<accession>Q81GK1</accession>
<feature type="chain" id="PRO_0000369641" description="UPF0738 protein BC_1197">
    <location>
        <begin position="1"/>
        <end position="123"/>
    </location>
</feature>
<protein>
    <recommendedName>
        <fullName evidence="1">UPF0738 protein BC_1197</fullName>
    </recommendedName>
</protein>
<evidence type="ECO:0000255" key="1">
    <source>
        <dbReference type="HAMAP-Rule" id="MF_01861"/>
    </source>
</evidence>
<dbReference type="EMBL" id="AE016877">
    <property type="protein sequence ID" value="AAP08183.1"/>
    <property type="molecule type" value="Genomic_DNA"/>
</dbReference>
<dbReference type="RefSeq" id="NP_830982.1">
    <property type="nucleotide sequence ID" value="NC_004722.1"/>
</dbReference>
<dbReference type="RefSeq" id="WP_001180003.1">
    <property type="nucleotide sequence ID" value="NZ_CP138336.1"/>
</dbReference>
<dbReference type="STRING" id="226900.BC_1197"/>
<dbReference type="KEGG" id="bce:BC1197"/>
<dbReference type="PATRIC" id="fig|226900.8.peg.1165"/>
<dbReference type="HOGENOM" id="CLU_142282_0_0_9"/>
<dbReference type="OrthoDB" id="2966478at2"/>
<dbReference type="Proteomes" id="UP000001417">
    <property type="component" value="Chromosome"/>
</dbReference>
<dbReference type="HAMAP" id="MF_01861">
    <property type="entry name" value="UPF0738"/>
    <property type="match status" value="1"/>
</dbReference>
<dbReference type="InterPro" id="IPR020908">
    <property type="entry name" value="UPF0738"/>
</dbReference>
<dbReference type="Pfam" id="PF19785">
    <property type="entry name" value="UPF0738"/>
    <property type="match status" value="1"/>
</dbReference>
<sequence>MQNKIQVKSVEKRENALIFCAENSEIEVKELSARNHVLVDSDNLSFLYILENESSFIYVSIPHTCWEAMHEAMNNDVVMFVRVNDIEMELEGLKEEVEYLVENIEGNANYGEELVTAVEKVFL</sequence>